<sequence>MAETWMALPLFNRQNSPESSRDVLSMASPGLLPIDPSPEHDETNKFGPFDLLDNLPGELQLPADLNPARVGPTTHLPDLTDRADPEPRWMQISDLEVVGPGAVTCPFPGCKSTLRFTGSRELRRHYKQHFKRFFCRYPHCPQAGPGLQGPHPSTKRGFATRKDRARHEAKHDPRIQCPCLDERGERCSRMFSRLDNMRDHVRRIHNNSHYAGQETHGTADAIPDIDIHHEIEARS</sequence>
<evidence type="ECO:0000255" key="1">
    <source>
        <dbReference type="PROSITE-ProRule" id="PRU00042"/>
    </source>
</evidence>
<evidence type="ECO:0000256" key="2">
    <source>
        <dbReference type="SAM" id="MobiDB-lite"/>
    </source>
</evidence>
<evidence type="ECO:0000269" key="3">
    <source>
    </source>
</evidence>
<evidence type="ECO:0000303" key="4">
    <source>
    </source>
</evidence>
<evidence type="ECO:0000305" key="5">
    <source>
    </source>
</evidence>
<keyword id="KW-0479">Metal-binding</keyword>
<keyword id="KW-0539">Nucleus</keyword>
<keyword id="KW-1185">Reference proteome</keyword>
<keyword id="KW-0804">Transcription</keyword>
<keyword id="KW-0805">Transcription regulation</keyword>
<keyword id="KW-0862">Zinc</keyword>
<keyword id="KW-0863">Zinc-finger</keyword>
<proteinExistence type="predicted"/>
<protein>
    <recommendedName>
        <fullName evidence="4">Transcription factor hepR</fullName>
    </recommendedName>
    <alternativeName>
        <fullName evidence="4">Heptelidic acid biosynthesis cluster protein R</fullName>
    </alternativeName>
</protein>
<reference key="1">
    <citation type="journal article" date="2005" name="Nature">
        <title>Genome sequencing and analysis of Aspergillus oryzae.</title>
        <authorList>
            <person name="Machida M."/>
            <person name="Asai K."/>
            <person name="Sano M."/>
            <person name="Tanaka T."/>
            <person name="Kumagai T."/>
            <person name="Terai G."/>
            <person name="Kusumoto K."/>
            <person name="Arima T."/>
            <person name="Akita O."/>
            <person name="Kashiwagi Y."/>
            <person name="Abe K."/>
            <person name="Gomi K."/>
            <person name="Horiuchi H."/>
            <person name="Kitamoto K."/>
            <person name="Kobayashi T."/>
            <person name="Takeuchi M."/>
            <person name="Denning D.W."/>
            <person name="Galagan J.E."/>
            <person name="Nierman W.C."/>
            <person name="Yu J."/>
            <person name="Archer D.B."/>
            <person name="Bennett J.W."/>
            <person name="Bhatnagar D."/>
            <person name="Cleveland T.E."/>
            <person name="Fedorova N.D."/>
            <person name="Gotoh O."/>
            <person name="Horikawa H."/>
            <person name="Hosoyama A."/>
            <person name="Ichinomiya M."/>
            <person name="Igarashi R."/>
            <person name="Iwashita K."/>
            <person name="Juvvadi P.R."/>
            <person name="Kato M."/>
            <person name="Kato Y."/>
            <person name="Kin T."/>
            <person name="Kokubun A."/>
            <person name="Maeda H."/>
            <person name="Maeyama N."/>
            <person name="Maruyama J."/>
            <person name="Nagasaki H."/>
            <person name="Nakajima T."/>
            <person name="Oda K."/>
            <person name="Okada K."/>
            <person name="Paulsen I."/>
            <person name="Sakamoto K."/>
            <person name="Sawano T."/>
            <person name="Takahashi M."/>
            <person name="Takase K."/>
            <person name="Terabayashi Y."/>
            <person name="Wortman J.R."/>
            <person name="Yamada O."/>
            <person name="Yamagata Y."/>
            <person name="Anazawa H."/>
            <person name="Hata Y."/>
            <person name="Koide Y."/>
            <person name="Komori T."/>
            <person name="Koyama Y."/>
            <person name="Minetoki T."/>
            <person name="Suharnan S."/>
            <person name="Tanaka A."/>
            <person name="Isono K."/>
            <person name="Kuhara S."/>
            <person name="Ogasawara N."/>
            <person name="Kikuchi H."/>
        </authorList>
    </citation>
    <scope>NUCLEOTIDE SEQUENCE [LARGE SCALE GENOMIC DNA]</scope>
    <source>
        <strain>ATCC 42149 / RIB 40</strain>
    </source>
</reference>
<reference key="2">
    <citation type="journal article" date="2019" name="Biosci. Biotechnol. Biochem.">
        <title>Identification of a gene cluster for biosynthesis of the sesquiterpene antibiotic, heptelidic acid, in Aspergillus oryzae.</title>
        <authorList>
            <person name="Shinohara Y."/>
            <person name="Nishimura I."/>
            <person name="Koyama Y."/>
        </authorList>
    </citation>
    <scope>FUNCTION</scope>
    <scope>DISRUPTION PHENOTYPE</scope>
</reference>
<organism>
    <name type="scientific">Aspergillus oryzae (strain ATCC 42149 / RIB 40)</name>
    <name type="common">Yellow koji mold</name>
    <dbReference type="NCBI Taxonomy" id="510516"/>
    <lineage>
        <taxon>Eukaryota</taxon>
        <taxon>Fungi</taxon>
        <taxon>Dikarya</taxon>
        <taxon>Ascomycota</taxon>
        <taxon>Pezizomycotina</taxon>
        <taxon>Eurotiomycetes</taxon>
        <taxon>Eurotiomycetidae</taxon>
        <taxon>Eurotiales</taxon>
        <taxon>Aspergillaceae</taxon>
        <taxon>Aspergillus</taxon>
        <taxon>Aspergillus subgen. Circumdati</taxon>
    </lineage>
</organism>
<gene>
    <name evidence="4" type="primary">hepR</name>
    <name type="ORF">AO090011000416</name>
</gene>
<comment type="function">
    <text evidence="3">Transcription factor; part of the gene cluster that mediates the biosynthesis of heptelidic acid (HA), a sesquiterpene lactone that acts as an inhibitor of glyceraldehyde-3-phosphatedehydrogenase (GAPDH) and a growth inhibitor of the salt-tolerant lactic acid bacteria in soy sauce brewing (PubMed:30466366). Both hepR and hepS regulate the transcription of the heptelidic acid cluster, but they are not involved in mutual transcriptional regulation and act with different mechanisms (PubMed:30466366).</text>
</comment>
<comment type="subcellular location">
    <subcellularLocation>
        <location evidence="5">Nucleus</location>
    </subcellularLocation>
</comment>
<comment type="disruption phenotype">
    <text evidence="3">Reduces markedly the expression of hepA and abolishes the production of heptelidic acid.</text>
</comment>
<dbReference type="EMBL" id="BA000055">
    <property type="protein sequence ID" value="BAE64920.1"/>
    <property type="molecule type" value="Genomic_DNA"/>
</dbReference>
<dbReference type="RefSeq" id="XP_001826053.1">
    <property type="nucleotide sequence ID" value="XM_001826001.2"/>
</dbReference>
<dbReference type="EnsemblFungi" id="BAE64920">
    <property type="protein sequence ID" value="BAE64920"/>
    <property type="gene ID" value="AO090011000416"/>
</dbReference>
<dbReference type="GeneID" id="5998156"/>
<dbReference type="KEGG" id="aor:AO090011000416"/>
<dbReference type="VEuPathDB" id="FungiDB:AO090011000416"/>
<dbReference type="HOGENOM" id="CLU_1103381_0_0_1"/>
<dbReference type="OMA" id="HYKQHFK"/>
<dbReference type="OrthoDB" id="121468at5052"/>
<dbReference type="Proteomes" id="UP000006564">
    <property type="component" value="Chromosome 7"/>
</dbReference>
<dbReference type="GO" id="GO:0005634">
    <property type="term" value="C:nucleus"/>
    <property type="evidence" value="ECO:0007669"/>
    <property type="project" value="UniProtKB-SubCell"/>
</dbReference>
<dbReference type="GO" id="GO:0008270">
    <property type="term" value="F:zinc ion binding"/>
    <property type="evidence" value="ECO:0007669"/>
    <property type="project" value="UniProtKB-KW"/>
</dbReference>
<dbReference type="InterPro" id="IPR013087">
    <property type="entry name" value="Znf_C2H2_type"/>
</dbReference>
<dbReference type="SMART" id="SM00355">
    <property type="entry name" value="ZnF_C2H2"/>
    <property type="match status" value="3"/>
</dbReference>
<dbReference type="PROSITE" id="PS50157">
    <property type="entry name" value="ZINC_FINGER_C2H2_2"/>
    <property type="match status" value="1"/>
</dbReference>
<name>HEPR_ASPOR</name>
<accession>Q2U0J5</accession>
<feature type="chain" id="PRO_0000450835" description="Transcription factor hepR">
    <location>
        <begin position="1"/>
        <end position="235"/>
    </location>
</feature>
<feature type="zinc finger region" description="C2H2-type" evidence="1">
    <location>
        <begin position="175"/>
        <end position="205"/>
    </location>
</feature>
<feature type="region of interest" description="Disordered" evidence="2">
    <location>
        <begin position="14"/>
        <end position="45"/>
    </location>
</feature>